<feature type="chain" id="PRO_0000210384" description="Uncharacterized protein MG007 homolog">
    <location>
        <begin position="1"/>
        <end position="253"/>
    </location>
</feature>
<reference key="1">
    <citation type="journal article" date="1996" name="Nucleic Acids Res.">
        <title>Complete sequence analysis of the genome of the bacterium Mycoplasma pneumoniae.</title>
        <authorList>
            <person name="Himmelreich R."/>
            <person name="Hilbert H."/>
            <person name="Plagens H."/>
            <person name="Pirkl E."/>
            <person name="Li B.-C."/>
            <person name="Herrmann R."/>
        </authorList>
    </citation>
    <scope>NUCLEOTIDE SEQUENCE [LARGE SCALE GENOMIC DNA]</scope>
    <source>
        <strain>ATCC 29342 / M129 / Subtype 1</strain>
    </source>
</reference>
<organism>
    <name type="scientific">Mycoplasma pneumoniae (strain ATCC 29342 / M129 / Subtype 1)</name>
    <name type="common">Mycoplasmoides pneumoniae</name>
    <dbReference type="NCBI Taxonomy" id="272634"/>
    <lineage>
        <taxon>Bacteria</taxon>
        <taxon>Bacillati</taxon>
        <taxon>Mycoplasmatota</taxon>
        <taxon>Mycoplasmoidales</taxon>
        <taxon>Mycoplasmoidaceae</taxon>
        <taxon>Mycoplasmoides</taxon>
    </lineage>
</organism>
<sequence length="253" mass="29056">MFNPTHALLIIQRRGSYLQPVLTEYLTRVVCEQQTGCQTCPSCLEILHGTYNNFYSFDQANPFKREHALHLSEVLNRQSESNQKQLYLIKNLETLTATAMNSLLRLIEEHPVNTYGVFTTKNENMILPTILSRVQKVVLKKATQLPFQVDSKDQAILKSFFSVDEQLQALDNGSFTRLKTIITTLTNKKNTASTVHEAWVLFKQLNQTETAQVLNFMVDYTKDLTKKDRLLNMVQNLVFNPPKAALFANLINW</sequence>
<gene>
    <name type="ordered locus">MPN_007</name>
    <name type="ORF">D12_orf253</name>
    <name type="ORF">MP147</name>
</gene>
<accession>P75105</accession>
<keyword id="KW-1185">Reference proteome</keyword>
<name>Y007_MYCPN</name>
<dbReference type="EMBL" id="U00089">
    <property type="protein sequence ID" value="AAB95795.1"/>
    <property type="molecule type" value="Genomic_DNA"/>
</dbReference>
<dbReference type="PIR" id="S73473">
    <property type="entry name" value="S73473"/>
</dbReference>
<dbReference type="RefSeq" id="NP_109695.1">
    <property type="nucleotide sequence ID" value="NC_000912.1"/>
</dbReference>
<dbReference type="RefSeq" id="WP_010874364.1">
    <property type="nucleotide sequence ID" value="NZ_OU342337.1"/>
</dbReference>
<dbReference type="SMR" id="P75105"/>
<dbReference type="IntAct" id="P75105">
    <property type="interactions" value="4"/>
</dbReference>
<dbReference type="STRING" id="272634.MPN_007"/>
<dbReference type="EnsemblBacteria" id="AAB95795">
    <property type="protein sequence ID" value="AAB95795"/>
    <property type="gene ID" value="MPN_007"/>
</dbReference>
<dbReference type="KEGG" id="mpn:MPN_007"/>
<dbReference type="PATRIC" id="fig|272634.6.peg.7"/>
<dbReference type="HOGENOM" id="CLU_1097637_0_0_14"/>
<dbReference type="OrthoDB" id="9810148at2"/>
<dbReference type="BioCyc" id="MPNE272634:G1GJ3-10-MONOMER"/>
<dbReference type="Proteomes" id="UP000000808">
    <property type="component" value="Chromosome"/>
</dbReference>
<dbReference type="Gene3D" id="3.40.50.300">
    <property type="entry name" value="P-loop containing nucleotide triphosphate hydrolases"/>
    <property type="match status" value="1"/>
</dbReference>
<dbReference type="InterPro" id="IPR027417">
    <property type="entry name" value="P-loop_NTPase"/>
</dbReference>
<dbReference type="NCBIfam" id="NF004488">
    <property type="entry name" value="PRK05818.1"/>
    <property type="match status" value="1"/>
</dbReference>
<dbReference type="Pfam" id="PF13177">
    <property type="entry name" value="DNA_pol3_delta2"/>
    <property type="match status" value="1"/>
</dbReference>
<dbReference type="SUPFAM" id="SSF52540">
    <property type="entry name" value="P-loop containing nucleoside triphosphate hydrolases"/>
    <property type="match status" value="1"/>
</dbReference>
<proteinExistence type="predicted"/>
<protein>
    <recommendedName>
        <fullName>Uncharacterized protein MG007 homolog</fullName>
    </recommendedName>
</protein>